<proteinExistence type="inferred from homology"/>
<feature type="chain" id="PRO_0000390090" description="NADH-quinone oxidoreductase subunit K">
    <location>
        <begin position="1"/>
        <end position="100"/>
    </location>
</feature>
<feature type="transmembrane region" description="Helical" evidence="1">
    <location>
        <begin position="2"/>
        <end position="22"/>
    </location>
</feature>
<feature type="transmembrane region" description="Helical" evidence="1">
    <location>
        <begin position="28"/>
        <end position="48"/>
    </location>
</feature>
<feature type="transmembrane region" description="Helical" evidence="1">
    <location>
        <begin position="63"/>
        <end position="83"/>
    </location>
</feature>
<gene>
    <name evidence="1" type="primary">nuoK</name>
    <name type="ordered locus">HH_1593</name>
</gene>
<comment type="function">
    <text evidence="1">NDH-1 shuttles electrons from NADH, via FMN and iron-sulfur (Fe-S) centers, to quinones in the respiratory chain. The immediate electron acceptor for the enzyme in this species is believed to be ubiquinone. Couples the redox reaction to proton translocation (for every two electrons transferred, four hydrogen ions are translocated across the cytoplasmic membrane), and thus conserves the redox energy in a proton gradient.</text>
</comment>
<comment type="catalytic activity">
    <reaction evidence="1">
        <text>a quinone + NADH + 5 H(+)(in) = a quinol + NAD(+) + 4 H(+)(out)</text>
        <dbReference type="Rhea" id="RHEA:57888"/>
        <dbReference type="ChEBI" id="CHEBI:15378"/>
        <dbReference type="ChEBI" id="CHEBI:24646"/>
        <dbReference type="ChEBI" id="CHEBI:57540"/>
        <dbReference type="ChEBI" id="CHEBI:57945"/>
        <dbReference type="ChEBI" id="CHEBI:132124"/>
    </reaction>
</comment>
<comment type="subunit">
    <text evidence="1">NDH-1 is composed of 14 different subunits. Subunits NuoA, H, J, K, L, M, N constitute the membrane sector of the complex.</text>
</comment>
<comment type="subcellular location">
    <subcellularLocation>
        <location evidence="1">Cell inner membrane</location>
        <topology evidence="1">Multi-pass membrane protein</topology>
    </subcellularLocation>
</comment>
<comment type="similarity">
    <text evidence="1">Belongs to the complex I subunit 4L family.</text>
</comment>
<protein>
    <recommendedName>
        <fullName evidence="1">NADH-quinone oxidoreductase subunit K</fullName>
        <ecNumber evidence="1">7.1.1.-</ecNumber>
    </recommendedName>
    <alternativeName>
        <fullName evidence="1">NADH dehydrogenase I subunit K</fullName>
    </alternativeName>
    <alternativeName>
        <fullName evidence="1">NDH-1 subunit K</fullName>
    </alternativeName>
</protein>
<dbReference type="EC" id="7.1.1.-" evidence="1"/>
<dbReference type="EMBL" id="AE017125">
    <property type="protein sequence ID" value="AAP78190.1"/>
    <property type="molecule type" value="Genomic_DNA"/>
</dbReference>
<dbReference type="RefSeq" id="WP_011116433.1">
    <property type="nucleotide sequence ID" value="NC_004917.1"/>
</dbReference>
<dbReference type="SMR" id="Q7VFT2"/>
<dbReference type="STRING" id="235279.HH_1593"/>
<dbReference type="KEGG" id="hhe:HH_1593"/>
<dbReference type="eggNOG" id="COG0713">
    <property type="taxonomic scope" value="Bacteria"/>
</dbReference>
<dbReference type="HOGENOM" id="CLU_144724_0_0_7"/>
<dbReference type="OrthoDB" id="9810120at2"/>
<dbReference type="Proteomes" id="UP000002495">
    <property type="component" value="Chromosome"/>
</dbReference>
<dbReference type="GO" id="GO:0030964">
    <property type="term" value="C:NADH dehydrogenase complex"/>
    <property type="evidence" value="ECO:0007669"/>
    <property type="project" value="TreeGrafter"/>
</dbReference>
<dbReference type="GO" id="GO:0005886">
    <property type="term" value="C:plasma membrane"/>
    <property type="evidence" value="ECO:0007669"/>
    <property type="project" value="UniProtKB-SubCell"/>
</dbReference>
<dbReference type="GO" id="GO:0050136">
    <property type="term" value="F:NADH:ubiquinone reductase (non-electrogenic) activity"/>
    <property type="evidence" value="ECO:0007669"/>
    <property type="project" value="UniProtKB-UniRule"/>
</dbReference>
<dbReference type="GO" id="GO:0048038">
    <property type="term" value="F:quinone binding"/>
    <property type="evidence" value="ECO:0007669"/>
    <property type="project" value="UniProtKB-KW"/>
</dbReference>
<dbReference type="GO" id="GO:0042773">
    <property type="term" value="P:ATP synthesis coupled electron transport"/>
    <property type="evidence" value="ECO:0007669"/>
    <property type="project" value="InterPro"/>
</dbReference>
<dbReference type="FunFam" id="1.10.287.3510:FF:000001">
    <property type="entry name" value="NADH-quinone oxidoreductase subunit K"/>
    <property type="match status" value="1"/>
</dbReference>
<dbReference type="Gene3D" id="1.10.287.3510">
    <property type="match status" value="1"/>
</dbReference>
<dbReference type="HAMAP" id="MF_01456">
    <property type="entry name" value="NDH1_NuoK"/>
    <property type="match status" value="1"/>
</dbReference>
<dbReference type="InterPro" id="IPR001133">
    <property type="entry name" value="NADH_UbQ_OxRdtase_chain4L/K"/>
</dbReference>
<dbReference type="InterPro" id="IPR039428">
    <property type="entry name" value="NUOK/Mnh_C1-like"/>
</dbReference>
<dbReference type="NCBIfam" id="NF004320">
    <property type="entry name" value="PRK05715.1-2"/>
    <property type="match status" value="1"/>
</dbReference>
<dbReference type="NCBIfam" id="NF004321">
    <property type="entry name" value="PRK05715.1-3"/>
    <property type="match status" value="1"/>
</dbReference>
<dbReference type="NCBIfam" id="NF004323">
    <property type="entry name" value="PRK05715.1-5"/>
    <property type="match status" value="1"/>
</dbReference>
<dbReference type="PANTHER" id="PTHR11434:SF21">
    <property type="entry name" value="NADH DEHYDROGENASE SUBUNIT 4L-RELATED"/>
    <property type="match status" value="1"/>
</dbReference>
<dbReference type="PANTHER" id="PTHR11434">
    <property type="entry name" value="NADH-UBIQUINONE OXIDOREDUCTASE SUBUNIT ND4L"/>
    <property type="match status" value="1"/>
</dbReference>
<dbReference type="Pfam" id="PF00420">
    <property type="entry name" value="Oxidored_q2"/>
    <property type="match status" value="1"/>
</dbReference>
<keyword id="KW-0997">Cell inner membrane</keyword>
<keyword id="KW-1003">Cell membrane</keyword>
<keyword id="KW-0472">Membrane</keyword>
<keyword id="KW-0520">NAD</keyword>
<keyword id="KW-0874">Quinone</keyword>
<keyword id="KW-1185">Reference proteome</keyword>
<keyword id="KW-1278">Translocase</keyword>
<keyword id="KW-0812">Transmembrane</keyword>
<keyword id="KW-1133">Transmembrane helix</keyword>
<keyword id="KW-0813">Transport</keyword>
<keyword id="KW-0830">Ubiquinone</keyword>
<organism>
    <name type="scientific">Helicobacter hepaticus (strain ATCC 51449 / 3B1)</name>
    <dbReference type="NCBI Taxonomy" id="235279"/>
    <lineage>
        <taxon>Bacteria</taxon>
        <taxon>Pseudomonadati</taxon>
        <taxon>Campylobacterota</taxon>
        <taxon>Epsilonproteobacteria</taxon>
        <taxon>Campylobacterales</taxon>
        <taxon>Helicobacteraceae</taxon>
        <taxon>Helicobacter</taxon>
    </lineage>
</organism>
<name>NUOK_HELHP</name>
<reference key="1">
    <citation type="journal article" date="2003" name="Proc. Natl. Acad. Sci. U.S.A.">
        <title>The complete genome sequence of the carcinogenic bacterium Helicobacter hepaticus.</title>
        <authorList>
            <person name="Suerbaum S."/>
            <person name="Josenhans C."/>
            <person name="Sterzenbach T."/>
            <person name="Drescher B."/>
            <person name="Brandt P."/>
            <person name="Bell M."/>
            <person name="Droege M."/>
            <person name="Fartmann B."/>
            <person name="Fischer H.-P."/>
            <person name="Ge Z."/>
            <person name="Hoerster A."/>
            <person name="Holland R."/>
            <person name="Klein K."/>
            <person name="Koenig J."/>
            <person name="Macko L."/>
            <person name="Mendz G.L."/>
            <person name="Nyakatura G."/>
            <person name="Schauer D.B."/>
            <person name="Shen Z."/>
            <person name="Weber J."/>
            <person name="Frosch M."/>
            <person name="Fox J.G."/>
        </authorList>
    </citation>
    <scope>NUCLEOTIDE SEQUENCE [LARGE SCALE GENOMIC DNA]</scope>
    <source>
        <strain>ATCC 51449 / 3B1</strain>
    </source>
</reference>
<sequence>MISLNHYLLLCVILFCIGLFGILRRSNILMLFFSTEILLNAINIGFVAIGSYLNDLNGEIFALFIIAIAASEIAVGLGLVVIWYKKHRTLDITTLQNLKG</sequence>
<evidence type="ECO:0000255" key="1">
    <source>
        <dbReference type="HAMAP-Rule" id="MF_01456"/>
    </source>
</evidence>
<accession>Q7VFT2</accession>